<name>KNG1_RAT</name>
<evidence type="ECO:0000250" key="1">
    <source>
        <dbReference type="UniProtKB" id="P01042"/>
    </source>
</evidence>
<evidence type="ECO:0000255" key="2"/>
<evidence type="ECO:0000255" key="3">
    <source>
        <dbReference type="PROSITE-ProRule" id="PRU00979"/>
    </source>
</evidence>
<evidence type="ECO:0000256" key="4">
    <source>
        <dbReference type="SAM" id="MobiDB-lite"/>
    </source>
</evidence>
<evidence type="ECO:0000303" key="5">
    <source>
    </source>
</evidence>
<evidence type="ECO:0000303" key="6">
    <source>
    </source>
</evidence>
<evidence type="ECO:0000305" key="7"/>
<proteinExistence type="evidence at transcript level"/>
<comment type="function">
    <text>Kininogens are inhibitors of thiol proteases. HMW-kininogen plays an important role in blood coagulation by helping to position optimally prekallikrein and factor XI next to factor XII; HMW-kininogen inhibits the thrombin- and plasmin-induced aggregation of thrombocytes. LMW-kininogen inhibits the aggregation of thrombocytes. LMW-kininogen is in contrast to HMW-kininogen not involved in blood clotting.</text>
</comment>
<comment type="function">
    <molecule>Bradykinin</molecule>
    <text evidence="1">The active peptide bradykinin is a potent vasodilatator that is released from HMW-kininogen shows a variety of physiological effects: (A) influence in smooth muscle contraction, (B) induction of hypotension, (C) natriuresis and diuresis, (D) decrease in blood glucose level, (E) it is a mediator of inflammation and causes (E1) increase in vascular permeability, (E2) stimulation of nociceptors (4E3) release of other mediators of inflammation (e.g. prostaglandins), (F) it has a cardioprotective effect (directly via bradykinin action, indirectly via endothelium-derived relaxing factor action).</text>
</comment>
<comment type="subcellular location">
    <subcellularLocation>
        <location>Secreted</location>
        <location>Extracellular space</location>
    </subcellularLocation>
</comment>
<comment type="alternative products">
    <event type="alternative splicing"/>
    <isoform>
        <id>P08934-1</id>
        <name>HMW</name>
        <sequence type="displayed"/>
    </isoform>
    <isoform>
        <id>P08934-2</id>
        <name>LMW</name>
        <sequence type="described" ref="VSP_001265 VSP_001266"/>
    </isoform>
</comment>
<comment type="tissue specificity">
    <text>Plasma.</text>
</comment>
<comment type="PTM">
    <text>Bradykinin is released from kininogen by plasma kallikrein.</text>
</comment>
<comment type="PTM">
    <text evidence="1">Phosphorylated by FAM20C in the extracellular medium.</text>
</comment>
<comment type="PTM">
    <molecule>Bradykinin</molecule>
    <text evidence="1">Bradykinin is inactivated by ACE, which removes the dipeptide Arg-Phe from its C-terminus.</text>
</comment>
<comment type="miscellaneous">
    <text>Rats express four types of kininogens: the classical HMW/LMW kininogens and two additional LMW-like kininogens: T-I and T-II.</text>
</comment>
<feature type="signal peptide">
    <location>
        <begin position="1"/>
        <end position="18"/>
    </location>
</feature>
<feature type="chain" id="PRO_0000006695" description="Kininogen-1">
    <location>
        <begin position="19"/>
        <end position="639"/>
    </location>
</feature>
<feature type="chain" id="PRO_0000006696" description="Kininogen-1 heavy chain">
    <location>
        <begin position="19"/>
        <end position="380"/>
    </location>
</feature>
<feature type="peptide" id="PRO_0000006697" description="Bradykinin">
    <location>
        <begin position="381"/>
        <end position="389"/>
    </location>
</feature>
<feature type="chain" id="PRO_0000006698" description="Kininogen-1 light chain">
    <location>
        <begin position="390"/>
        <end position="639"/>
    </location>
</feature>
<feature type="domain" description="Cystatin kininogen-type 1" evidence="3">
    <location>
        <begin position="28"/>
        <end position="132"/>
    </location>
</feature>
<feature type="domain" description="Cystatin kininogen-type 2" evidence="3">
    <location>
        <begin position="151"/>
        <end position="254"/>
    </location>
</feature>
<feature type="domain" description="Cystatin kininogen-type 3" evidence="3">
    <location>
        <begin position="273"/>
        <end position="376"/>
    </location>
</feature>
<feature type="region of interest" description="Disordered" evidence="4">
    <location>
        <begin position="438"/>
        <end position="462"/>
    </location>
</feature>
<feature type="region of interest" description="Disordered" evidence="4">
    <location>
        <begin position="476"/>
        <end position="547"/>
    </location>
</feature>
<feature type="compositionally biased region" description="Basic residues" evidence="4">
    <location>
        <begin position="482"/>
        <end position="502"/>
    </location>
</feature>
<feature type="compositionally biased region" description="Basic and acidic residues" evidence="4">
    <location>
        <begin position="503"/>
        <end position="519"/>
    </location>
</feature>
<feature type="compositionally biased region" description="Polar residues" evidence="4">
    <location>
        <begin position="522"/>
        <end position="537"/>
    </location>
</feature>
<feature type="site" description="Cleavage; by ACE" evidence="1">
    <location>
        <begin position="387"/>
        <end position="388"/>
    </location>
</feature>
<feature type="modified residue" description="Phosphoserine" evidence="1">
    <location>
        <position position="332"/>
    </location>
</feature>
<feature type="glycosylation site" description="N-linked (GlcNAc...) asparagine" evidence="2">
    <location>
        <position position="82"/>
    </location>
</feature>
<feature type="glycosylation site" description="N-linked (GlcNAc...) asparagine" evidence="2">
    <location>
        <position position="169"/>
    </location>
</feature>
<feature type="glycosylation site" description="N-linked (GlcNAc...) asparagine" evidence="2">
    <location>
        <position position="205"/>
    </location>
</feature>
<feature type="glycosylation site" description="N-linked (GlcNAc...) asparagine" evidence="2">
    <location>
        <position position="294"/>
    </location>
</feature>
<feature type="glycosylation site" description="N-linked (GlcNAc...) asparagine" evidence="2">
    <location>
        <position position="529"/>
    </location>
</feature>
<feature type="disulfide bond" description="Interchain (between heavy and light chains)" evidence="3">
    <location>
        <begin position="28"/>
        <end position="609"/>
    </location>
</feature>
<feature type="disulfide bond" evidence="3">
    <location>
        <begin position="83"/>
        <end position="94"/>
    </location>
</feature>
<feature type="disulfide bond" evidence="3">
    <location>
        <begin position="107"/>
        <end position="126"/>
    </location>
</feature>
<feature type="disulfide bond" evidence="3">
    <location>
        <begin position="142"/>
        <end position="145"/>
    </location>
</feature>
<feature type="disulfide bond" evidence="3">
    <location>
        <begin position="206"/>
        <end position="218"/>
    </location>
</feature>
<feature type="disulfide bond" evidence="3">
    <location>
        <begin position="229"/>
        <end position="248"/>
    </location>
</feature>
<feature type="disulfide bond" evidence="3">
    <location>
        <begin position="264"/>
        <end position="267"/>
    </location>
</feature>
<feature type="disulfide bond" evidence="3">
    <location>
        <begin position="328"/>
        <end position="340"/>
    </location>
</feature>
<feature type="disulfide bond" evidence="3">
    <location>
        <begin position="351"/>
        <end position="370"/>
    </location>
</feature>
<feature type="splice variant" id="VSP_001265" description="In isoform LMW." evidence="5 6">
    <original>VSPSYIARVQEERDPGNEQGPIHGHGWLHAKQ</original>
    <variation>RLLNSCEYKGRLLKAGAGPAPERQAEASTVTP</variation>
    <location>
        <begin position="402"/>
        <end position="433"/>
    </location>
</feature>
<feature type="splice variant" id="VSP_001266" description="In isoform LMW." evidence="5 6">
    <location>
        <begin position="434"/>
        <end position="639"/>
    </location>
</feature>
<feature type="sequence conflict" description="In Ref. 2." evidence="7" ref="2">
    <original>E</original>
    <variation>K</variation>
    <location>
        <position position="61"/>
    </location>
</feature>
<sequence length="639" mass="70933">MKLITILLLCSRLLPSLAQEEDAQEMDCNDESLFQAVDTALKKYNAGLKSGNQFVLYQVTEGTKKDGSKTFYSFKYQIKEGNCSVQSGFAWQDCDFKDAEEAATGECTATLEKRRNNKFSIATQICNITPGKGPIVTNEYHCLGCMHPISVDSPELGPVLKHAVEHFNNNTKHTHLFALGEVKSADRQVVAGMNYQIIYSIVQTNCSKEDFPSLHEDCVPLPSGDDGECKGNAFVDIHKTIAGFSDSCEFYPGDDLFELLPEDCPGCPRNIPVDSPELKEALGHSIAQLNAENNHTFYFKIDTVKKATSQVVAGTKYVIEFIARETKCSKESNAELTADCETKRLGQSLNCNANVYMRPWENKVVPTVKCKVLDMTSVIRRPPGFSPFRAPRVKKPKESTTVSPSYIARVQEERDPGNEQGPIHGHGWLHAKQIKNKNHQGHKHGHGIGHGHQKPHGLGHGHQLKLDDLKQQREDGYDHRHPVGHGHGQRHGHGHGHGHGRDKHTNKDKNNVKHTDQRRAPLTSSSEDNTTSTQIQGRTEGFTLNPPLAQPAVISRGFQDSGFTEGVIATTSPYDTETHDDLIPDIHVQPDSLSFKLISDFPEATSHKCPGRPWKPVSRKDPTIETTEFSDFDLLDALS</sequence>
<keyword id="KW-0025">Alternative splicing</keyword>
<keyword id="KW-0094">Blood coagulation</keyword>
<keyword id="KW-1015">Disulfide bond</keyword>
<keyword id="KW-0325">Glycoprotein</keyword>
<keyword id="KW-0356">Hemostasis</keyword>
<keyword id="KW-0395">Inflammatory response</keyword>
<keyword id="KW-0597">Phosphoprotein</keyword>
<keyword id="KW-0646">Protease inhibitor</keyword>
<keyword id="KW-1185">Reference proteome</keyword>
<keyword id="KW-0677">Repeat</keyword>
<keyword id="KW-0964">Secreted</keyword>
<keyword id="KW-0732">Signal</keyword>
<keyword id="KW-0789">Thiol protease inhibitor</keyword>
<keyword id="KW-0838">Vasoactive</keyword>
<keyword id="KW-0840">Vasodilator</keyword>
<reference key="1">
    <citation type="journal article" date="1987" name="J. Biol. Chem.">
        <title>Differing expression patterns and evolution of the rat kininogen gene family.</title>
        <authorList>
            <person name="Kitagawa H."/>
            <person name="Kitamura N."/>
            <person name="Hayashida H."/>
            <person name="Miyata T."/>
            <person name="Nakanishi S."/>
        </authorList>
    </citation>
    <scope>NUCLEOTIDE SEQUENCE [MRNA] (ISOFORMS HMW AND LMW)</scope>
</reference>
<reference key="2">
    <citation type="journal article" date="1985" name="J. Biol. Chem.">
        <title>Primary structures of the mRNAs encoding the rat precursors for bradykinin and T-kinin. Structural relationship of kininogens with major acute phase protein and alpha 1-cysteine proteinase inhibitor.</title>
        <authorList>
            <person name="Furuto-Kato S."/>
            <person name="Matsumoto A."/>
            <person name="Kitamura N."/>
            <person name="Nakanishi S."/>
        </authorList>
    </citation>
    <scope>NUCLEOTIDE SEQUENCE [MRNA] (ISOFORM LMW)</scope>
</reference>
<reference key="3">
    <citation type="journal article" date="1987" name="J. Biol. Chem.">
        <title>Structure and expression of the genes for major acute phase alpha 1-protein (thiostatin) and kininogen in the rat.</title>
        <authorList>
            <person name="Fung W.-P."/>
            <person name="Schreiber G."/>
        </authorList>
    </citation>
    <scope>NUCLEOTIDE SEQUENCE [GENOMIC DNA] OF 1-65</scope>
    <source>
        <strain>Buffalo</strain>
    </source>
</reference>
<reference key="4">
    <citation type="journal article" date="1987" name="J. Biol. Chem.">
        <title>Differing utilization of homologous transcription initiation sites of rat K and T kininogen genes under inflammation condition.</title>
        <authorList>
            <person name="Kageyama R."/>
            <person name="Kitamura N."/>
            <person name="Ohkubo H."/>
            <person name="Nakanishi S."/>
        </authorList>
    </citation>
    <scope>NUCLEOTIDE SEQUENCE [GENOMIC DNA] OF 1-41</scope>
    <source>
        <strain>Wistar</strain>
        <tissue>Liver</tissue>
    </source>
</reference>
<protein>
    <recommendedName>
        <fullName>Kininogen-1</fullName>
    </recommendedName>
    <component>
        <recommendedName>
            <fullName>Kininogen-1 heavy chain</fullName>
        </recommendedName>
    </component>
    <component>
        <recommendedName>
            <fullName>Bradykinin</fullName>
        </recommendedName>
    </component>
    <component>
        <recommendedName>
            <fullName>Kininogen-1 light chain</fullName>
        </recommendedName>
    </component>
</protein>
<gene>
    <name type="primary">Kng1</name>
    <name type="synonym">Kng</name>
</gene>
<dbReference type="EMBL" id="L29428">
    <property type="protein sequence ID" value="AAA41486.1"/>
    <property type="molecule type" value="mRNA"/>
</dbReference>
<dbReference type="EMBL" id="M11884">
    <property type="protein sequence ID" value="AAA41487.1"/>
    <property type="molecule type" value="mRNA"/>
</dbReference>
<dbReference type="EMBL" id="M14369">
    <property type="protein sequence ID" value="AAA41484.1"/>
    <property type="molecule type" value="Genomic_DNA"/>
</dbReference>
<dbReference type="EMBL" id="M14369">
    <property type="protein sequence ID" value="AAA41485.1"/>
    <property type="status" value="ALT_SEQ"/>
    <property type="molecule type" value="Genomic_DNA"/>
</dbReference>
<dbReference type="EMBL" id="M16455">
    <property type="protein sequence ID" value="AAA41482.1"/>
    <property type="molecule type" value="Genomic_DNA"/>
</dbReference>
<dbReference type="PIR" id="A25486">
    <property type="entry name" value="A25486"/>
</dbReference>
<dbReference type="PIR" id="A28055">
    <property type="entry name" value="A28055"/>
</dbReference>
<dbReference type="PIR" id="C25486">
    <property type="entry name" value="C25486"/>
</dbReference>
<dbReference type="RefSeq" id="NP_036873.1">
    <molecule id="P08934-1"/>
    <property type="nucleotide sequence ID" value="NM_012741.1"/>
</dbReference>
<dbReference type="SMR" id="P08934"/>
<dbReference type="FunCoup" id="P08934">
    <property type="interactions" value="41"/>
</dbReference>
<dbReference type="IntAct" id="P08934">
    <property type="interactions" value="1"/>
</dbReference>
<dbReference type="STRING" id="10116.ENSRNOP00000069578"/>
<dbReference type="MEROPS" id="I25.018"/>
<dbReference type="MEROPS" id="I25.019"/>
<dbReference type="MEROPS" id="I25.950"/>
<dbReference type="GlyCosmos" id="P08934">
    <property type="glycosylation" value="5 sites, No reported glycans"/>
</dbReference>
<dbReference type="GlyGen" id="P08934">
    <property type="glycosylation" value="5 sites"/>
</dbReference>
<dbReference type="PhosphoSitePlus" id="P08934"/>
<dbReference type="jPOST" id="P08934"/>
<dbReference type="PaxDb" id="10116-ENSRNOP00000065146"/>
<dbReference type="GeneID" id="25087"/>
<dbReference type="KEGG" id="rno:25087"/>
<dbReference type="UCSC" id="RGD:2980">
    <molecule id="P08934-1"/>
    <property type="organism name" value="rat"/>
</dbReference>
<dbReference type="AGR" id="RGD:1594590"/>
<dbReference type="CTD" id="25087"/>
<dbReference type="RGD" id="2980">
    <property type="gene designation" value="Kng1"/>
</dbReference>
<dbReference type="eggNOG" id="ENOG502RYAC">
    <property type="taxonomic scope" value="Eukaryota"/>
</dbReference>
<dbReference type="InParanoid" id="P08934"/>
<dbReference type="OrthoDB" id="74823at9989"/>
<dbReference type="Reactome" id="R-RNO-114608">
    <property type="pathway name" value="Platelet degranulation"/>
</dbReference>
<dbReference type="Reactome" id="R-RNO-140837">
    <property type="pathway name" value="Intrinsic Pathway of Fibrin Clot Formation"/>
</dbReference>
<dbReference type="Reactome" id="R-RNO-375276">
    <property type="pathway name" value="Peptide ligand-binding receptors"/>
</dbReference>
<dbReference type="Reactome" id="R-RNO-381426">
    <property type="pathway name" value="Regulation of Insulin-like Growth Factor (IGF) transport and uptake by Insulin-like Growth Factor Binding Proteins (IGFBPs)"/>
</dbReference>
<dbReference type="Reactome" id="R-RNO-416476">
    <property type="pathway name" value="G alpha (q) signalling events"/>
</dbReference>
<dbReference type="Reactome" id="R-RNO-418594">
    <property type="pathway name" value="G alpha (i) signalling events"/>
</dbReference>
<dbReference type="Reactome" id="R-RNO-8957275">
    <property type="pathway name" value="Post-translational protein phosphorylation"/>
</dbReference>
<dbReference type="PRO" id="PR:P08934"/>
<dbReference type="Proteomes" id="UP000002494">
    <property type="component" value="Unplaced"/>
</dbReference>
<dbReference type="GO" id="GO:0005576">
    <property type="term" value="C:extracellular region"/>
    <property type="evidence" value="ECO:0000318"/>
    <property type="project" value="GO_Central"/>
</dbReference>
<dbReference type="GO" id="GO:0005615">
    <property type="term" value="C:extracellular space"/>
    <property type="evidence" value="ECO:0000314"/>
    <property type="project" value="RGD"/>
</dbReference>
<dbReference type="GO" id="GO:0043204">
    <property type="term" value="C:perikaryon"/>
    <property type="evidence" value="ECO:0000314"/>
    <property type="project" value="RGD"/>
</dbReference>
<dbReference type="GO" id="GO:0004869">
    <property type="term" value="F:cysteine-type endopeptidase inhibitor activity"/>
    <property type="evidence" value="ECO:0000314"/>
    <property type="project" value="RGD"/>
</dbReference>
<dbReference type="GO" id="GO:0002020">
    <property type="term" value="F:protease binding"/>
    <property type="evidence" value="ECO:0000353"/>
    <property type="project" value="RGD"/>
</dbReference>
<dbReference type="GO" id="GO:0007596">
    <property type="term" value="P:blood coagulation"/>
    <property type="evidence" value="ECO:0007669"/>
    <property type="project" value="UniProtKB-KW"/>
</dbReference>
<dbReference type="GO" id="GO:0002542">
    <property type="term" value="P:Factor XII activation"/>
    <property type="evidence" value="ECO:0000314"/>
    <property type="project" value="RGD"/>
</dbReference>
<dbReference type="GO" id="GO:0030195">
    <property type="term" value="P:negative regulation of blood coagulation"/>
    <property type="evidence" value="ECO:0000318"/>
    <property type="project" value="GO_Central"/>
</dbReference>
<dbReference type="GO" id="GO:0007162">
    <property type="term" value="P:negative regulation of cell adhesion"/>
    <property type="evidence" value="ECO:0000318"/>
    <property type="project" value="GO_Central"/>
</dbReference>
<dbReference type="GO" id="GO:0050672">
    <property type="term" value="P:negative regulation of lymphocyte proliferation"/>
    <property type="evidence" value="ECO:0000314"/>
    <property type="project" value="RGD"/>
</dbReference>
<dbReference type="GO" id="GO:0045861">
    <property type="term" value="P:negative regulation of proteolysis"/>
    <property type="evidence" value="ECO:0000314"/>
    <property type="project" value="RGD"/>
</dbReference>
<dbReference type="GO" id="GO:0042130">
    <property type="term" value="P:negative regulation of T cell proliferation"/>
    <property type="evidence" value="ECO:0000314"/>
    <property type="project" value="RGD"/>
</dbReference>
<dbReference type="GO" id="GO:0001938">
    <property type="term" value="P:positive regulation of endothelial cell proliferation"/>
    <property type="evidence" value="ECO:0000314"/>
    <property type="project" value="RGD"/>
</dbReference>
<dbReference type="GO" id="GO:0048146">
    <property type="term" value="P:positive regulation of fibroblast proliferation"/>
    <property type="evidence" value="ECO:0000314"/>
    <property type="project" value="RGD"/>
</dbReference>
<dbReference type="GO" id="GO:0043410">
    <property type="term" value="P:positive regulation of MAPK cascade"/>
    <property type="evidence" value="ECO:0000314"/>
    <property type="project" value="RGD"/>
</dbReference>
<dbReference type="GO" id="GO:0042311">
    <property type="term" value="P:vasodilation"/>
    <property type="evidence" value="ECO:0007669"/>
    <property type="project" value="UniProtKB-KW"/>
</dbReference>
<dbReference type="CDD" id="cd00042">
    <property type="entry name" value="CY"/>
    <property type="match status" value="3"/>
</dbReference>
<dbReference type="FunFam" id="3.10.450.10:FF:000002">
    <property type="entry name" value="Kininogen 1"/>
    <property type="match status" value="2"/>
</dbReference>
<dbReference type="FunFam" id="3.10.450.10:FF:000008">
    <property type="entry name" value="Kininogen 1"/>
    <property type="match status" value="1"/>
</dbReference>
<dbReference type="Gene3D" id="3.10.450.10">
    <property type="match status" value="3"/>
</dbReference>
<dbReference type="InterPro" id="IPR000010">
    <property type="entry name" value="Cystatin_dom"/>
</dbReference>
<dbReference type="InterPro" id="IPR046350">
    <property type="entry name" value="Cystatin_sf"/>
</dbReference>
<dbReference type="InterPro" id="IPR002395">
    <property type="entry name" value="Kininogen"/>
</dbReference>
<dbReference type="InterPro" id="IPR027358">
    <property type="entry name" value="Kininogen-type_cystatin_dom"/>
</dbReference>
<dbReference type="InterPro" id="IPR050735">
    <property type="entry name" value="Kininogen_Fetuin_HRG"/>
</dbReference>
<dbReference type="InterPro" id="IPR018073">
    <property type="entry name" value="Prot_inh_cystat_CS"/>
</dbReference>
<dbReference type="PANTHER" id="PTHR13814">
    <property type="entry name" value="FETUIN"/>
    <property type="match status" value="1"/>
</dbReference>
<dbReference type="PANTHER" id="PTHR13814:SF12">
    <property type="entry name" value="KININOGEN-1"/>
    <property type="match status" value="1"/>
</dbReference>
<dbReference type="Pfam" id="PF00031">
    <property type="entry name" value="Cystatin"/>
    <property type="match status" value="3"/>
</dbReference>
<dbReference type="PRINTS" id="PR00334">
    <property type="entry name" value="KININOGEN"/>
</dbReference>
<dbReference type="SMART" id="SM00043">
    <property type="entry name" value="CY"/>
    <property type="match status" value="3"/>
</dbReference>
<dbReference type="SUPFAM" id="SSF54403">
    <property type="entry name" value="Cystatin/monellin"/>
    <property type="match status" value="3"/>
</dbReference>
<dbReference type="PROSITE" id="PS00287">
    <property type="entry name" value="CYSTATIN"/>
    <property type="match status" value="2"/>
</dbReference>
<dbReference type="PROSITE" id="PS51647">
    <property type="entry name" value="CYSTATIN_KININOGEN"/>
    <property type="match status" value="3"/>
</dbReference>
<accession>P08934</accession>
<accession>P08933</accession>
<organism>
    <name type="scientific">Rattus norvegicus</name>
    <name type="common">Rat</name>
    <dbReference type="NCBI Taxonomy" id="10116"/>
    <lineage>
        <taxon>Eukaryota</taxon>
        <taxon>Metazoa</taxon>
        <taxon>Chordata</taxon>
        <taxon>Craniata</taxon>
        <taxon>Vertebrata</taxon>
        <taxon>Euteleostomi</taxon>
        <taxon>Mammalia</taxon>
        <taxon>Eutheria</taxon>
        <taxon>Euarchontoglires</taxon>
        <taxon>Glires</taxon>
        <taxon>Rodentia</taxon>
        <taxon>Myomorpha</taxon>
        <taxon>Muroidea</taxon>
        <taxon>Muridae</taxon>
        <taxon>Murinae</taxon>
        <taxon>Rattus</taxon>
    </lineage>
</organism>